<accession>Q9DCM4</accession>
<accession>O54793</accession>
<accession>Q3V233</accession>
<accession>Q99K65</accession>
<protein>
    <recommendedName>
        <fullName>Dynein axonemal light chain 4</fullName>
    </recommendedName>
</protein>
<comment type="function">
    <text evidence="1">Force generating protein of respiratory cilia. Produces force towards the minus ends of microtubules. Dynein has ATPase activity (By similarity).</text>
</comment>
<comment type="subunit">
    <text>Consists of at least two heavy chains and a number of intermediate and light chains.</text>
</comment>
<comment type="subcellular location">
    <subcellularLocation>
        <location evidence="1">Cytoplasm</location>
        <location evidence="1">Cytoskeleton</location>
        <location evidence="1">Cilium axoneme</location>
    </subcellularLocation>
</comment>
<comment type="similarity">
    <text evidence="2">Belongs to the dynein light chain family.</text>
</comment>
<comment type="sequence caution" evidence="2">
    <conflict type="frameshift">
        <sequence resource="EMBL" id="AK002657"/>
    </conflict>
</comment>
<gene>
    <name type="primary">Dnal4</name>
    <name type="synonym">Dnalc4</name>
</gene>
<keyword id="KW-0966">Cell projection</keyword>
<keyword id="KW-0969">Cilium</keyword>
<keyword id="KW-0963">Cytoplasm</keyword>
<keyword id="KW-0206">Cytoskeleton</keyword>
<keyword id="KW-0243">Dynein</keyword>
<keyword id="KW-0493">Microtubule</keyword>
<keyword id="KW-0505">Motor protein</keyword>
<keyword id="KW-1185">Reference proteome</keyword>
<dbReference type="EMBL" id="AB010031">
    <property type="protein sequence ID" value="BAA24153.1"/>
    <property type="molecule type" value="mRNA"/>
</dbReference>
<dbReference type="EMBL" id="AK002657">
    <property type="status" value="NOT_ANNOTATED_CDS"/>
    <property type="molecule type" value="mRNA"/>
</dbReference>
<dbReference type="EMBL" id="AK132061">
    <property type="protein sequence ID" value="BAE20966.1"/>
    <property type="molecule type" value="mRNA"/>
</dbReference>
<dbReference type="EMBL" id="BC005426">
    <property type="protein sequence ID" value="AAH05426.1"/>
    <property type="molecule type" value="mRNA"/>
</dbReference>
<dbReference type="CCDS" id="CCDS27650.1"/>
<dbReference type="RefSeq" id="NP_001398847.1">
    <property type="nucleotide sequence ID" value="NM_001411918.1"/>
</dbReference>
<dbReference type="RefSeq" id="NP_059498.2">
    <property type="nucleotide sequence ID" value="NM_017470.3"/>
</dbReference>
<dbReference type="RefSeq" id="XP_006521233.1">
    <property type="nucleotide sequence ID" value="XM_006521170.2"/>
</dbReference>
<dbReference type="SMR" id="Q9DCM4"/>
<dbReference type="FunCoup" id="Q9DCM4">
    <property type="interactions" value="308"/>
</dbReference>
<dbReference type="STRING" id="10090.ENSMUSP00000023055"/>
<dbReference type="PhosphoSitePlus" id="Q9DCM4"/>
<dbReference type="PaxDb" id="10090-ENSMUSP00000023055"/>
<dbReference type="ProteomicsDB" id="279455"/>
<dbReference type="Pumba" id="Q9DCM4"/>
<dbReference type="DNASU" id="54152"/>
<dbReference type="Ensembl" id="ENSMUST00000023055.8">
    <property type="protein sequence ID" value="ENSMUSP00000023055.7"/>
    <property type="gene ID" value="ENSMUSG00000022420.17"/>
</dbReference>
<dbReference type="Ensembl" id="ENSMUST00000162713.9">
    <property type="protein sequence ID" value="ENSMUSP00000154848.2"/>
    <property type="gene ID" value="ENSMUSG00000022420.17"/>
</dbReference>
<dbReference type="GeneID" id="54152"/>
<dbReference type="KEGG" id="mmu:54152"/>
<dbReference type="UCSC" id="uc007wuj.2">
    <property type="organism name" value="mouse"/>
</dbReference>
<dbReference type="AGR" id="MGI:1859217"/>
<dbReference type="CTD" id="10126"/>
<dbReference type="MGI" id="MGI:1859217">
    <property type="gene designation" value="Dnal4"/>
</dbReference>
<dbReference type="VEuPathDB" id="HostDB:ENSMUSG00000022420"/>
<dbReference type="eggNOG" id="KOG3430">
    <property type="taxonomic scope" value="Eukaryota"/>
</dbReference>
<dbReference type="GeneTree" id="ENSGT00940000166105"/>
<dbReference type="HOGENOM" id="CLU_070944_3_0_1"/>
<dbReference type="InParanoid" id="Q9DCM4"/>
<dbReference type="OMA" id="CDMTDEM"/>
<dbReference type="OrthoDB" id="1430at9989"/>
<dbReference type="TreeFam" id="TF324136"/>
<dbReference type="Reactome" id="R-MMU-177504">
    <property type="pathway name" value="Retrograde neurotrophin signalling"/>
</dbReference>
<dbReference type="BioGRID-ORCS" id="54152">
    <property type="hits" value="3 hits in 75 CRISPR screens"/>
</dbReference>
<dbReference type="ChiTaRS" id="Dnal4">
    <property type="organism name" value="mouse"/>
</dbReference>
<dbReference type="PRO" id="PR:Q9DCM4"/>
<dbReference type="Proteomes" id="UP000000589">
    <property type="component" value="Chromosome 15"/>
</dbReference>
<dbReference type="RNAct" id="Q9DCM4">
    <property type="molecule type" value="protein"/>
</dbReference>
<dbReference type="Bgee" id="ENSMUSG00000022420">
    <property type="expression patterns" value="Expressed in spermatid and 225 other cell types or tissues"/>
</dbReference>
<dbReference type="ExpressionAtlas" id="Q9DCM4">
    <property type="expression patterns" value="baseline and differential"/>
</dbReference>
<dbReference type="GO" id="GO:0005929">
    <property type="term" value="C:cilium"/>
    <property type="evidence" value="ECO:0007669"/>
    <property type="project" value="UniProtKB-KW"/>
</dbReference>
<dbReference type="GO" id="GO:0005737">
    <property type="term" value="C:cytoplasm"/>
    <property type="evidence" value="ECO:0007669"/>
    <property type="project" value="UniProtKB-KW"/>
</dbReference>
<dbReference type="GO" id="GO:0030286">
    <property type="term" value="C:dynein complex"/>
    <property type="evidence" value="ECO:0007669"/>
    <property type="project" value="UniProtKB-KW"/>
</dbReference>
<dbReference type="GO" id="GO:0005874">
    <property type="term" value="C:microtubule"/>
    <property type="evidence" value="ECO:0007669"/>
    <property type="project" value="UniProtKB-KW"/>
</dbReference>
<dbReference type="GO" id="GO:0042802">
    <property type="term" value="F:identical protein binding"/>
    <property type="evidence" value="ECO:0007669"/>
    <property type="project" value="Ensembl"/>
</dbReference>
<dbReference type="GO" id="GO:0007017">
    <property type="term" value="P:microtubule-based process"/>
    <property type="evidence" value="ECO:0007669"/>
    <property type="project" value="InterPro"/>
</dbReference>
<dbReference type="CDD" id="cd21453">
    <property type="entry name" value="DLC-like_DNAL4"/>
    <property type="match status" value="1"/>
</dbReference>
<dbReference type="FunFam" id="3.30.740.10:FF:000002">
    <property type="entry name" value="Dynein light chain"/>
    <property type="match status" value="1"/>
</dbReference>
<dbReference type="Gene3D" id="3.30.740.10">
    <property type="entry name" value="Protein Inhibitor Of Neuronal Nitric Oxide Synthase"/>
    <property type="match status" value="1"/>
</dbReference>
<dbReference type="InterPro" id="IPR037177">
    <property type="entry name" value="DLC_sf"/>
</dbReference>
<dbReference type="InterPro" id="IPR001372">
    <property type="entry name" value="Dynein_light_chain_typ-1/2"/>
</dbReference>
<dbReference type="PANTHER" id="PTHR11886:SF2">
    <property type="entry name" value="DYNEIN AXONEMAL LIGHT CHAIN 4"/>
    <property type="match status" value="1"/>
</dbReference>
<dbReference type="PANTHER" id="PTHR11886">
    <property type="entry name" value="DYNEIN LIGHT CHAIN"/>
    <property type="match status" value="1"/>
</dbReference>
<dbReference type="Pfam" id="PF01221">
    <property type="entry name" value="Dynein_light"/>
    <property type="match status" value="1"/>
</dbReference>
<dbReference type="SMART" id="SM01375">
    <property type="entry name" value="Dynein_light"/>
    <property type="match status" value="1"/>
</dbReference>
<dbReference type="SUPFAM" id="SSF54648">
    <property type="entry name" value="DLC"/>
    <property type="match status" value="1"/>
</dbReference>
<evidence type="ECO:0000250" key="1"/>
<evidence type="ECO:0000305" key="2"/>
<feature type="chain" id="PRO_0000195137" description="Dynein axonemal light chain 4">
    <location>
        <begin position="1"/>
        <end position="105"/>
    </location>
</feature>
<feature type="sequence conflict" description="In Ref. 1; AK002657." evidence="2" ref="1">
    <original>N</original>
    <variation>Y</variation>
    <location>
        <position position="49"/>
    </location>
</feature>
<feature type="sequence conflict" description="In Ref. 1; AK002657." evidence="2" ref="1">
    <original>E</original>
    <variation>G</variation>
    <location>
        <position position="80"/>
    </location>
</feature>
<proteinExistence type="inferred from homology"/>
<reference key="1">
    <citation type="submission" date="1997-12" db="EMBL/GenBank/DDBJ databases">
        <title>Identification of mouse outer arm dynein light chain 4.</title>
        <authorList>
            <person name="Ogawa K."/>
        </authorList>
    </citation>
    <scope>NUCLEOTIDE SEQUENCE [MRNA]</scope>
</reference>
<reference key="2">
    <citation type="journal article" date="2005" name="Science">
        <title>The transcriptional landscape of the mammalian genome.</title>
        <authorList>
            <person name="Carninci P."/>
            <person name="Kasukawa T."/>
            <person name="Katayama S."/>
            <person name="Gough J."/>
            <person name="Frith M.C."/>
            <person name="Maeda N."/>
            <person name="Oyama R."/>
            <person name="Ravasi T."/>
            <person name="Lenhard B."/>
            <person name="Wells C."/>
            <person name="Kodzius R."/>
            <person name="Shimokawa K."/>
            <person name="Bajic V.B."/>
            <person name="Brenner S.E."/>
            <person name="Batalov S."/>
            <person name="Forrest A.R."/>
            <person name="Zavolan M."/>
            <person name="Davis M.J."/>
            <person name="Wilming L.G."/>
            <person name="Aidinis V."/>
            <person name="Allen J.E."/>
            <person name="Ambesi-Impiombato A."/>
            <person name="Apweiler R."/>
            <person name="Aturaliya R.N."/>
            <person name="Bailey T.L."/>
            <person name="Bansal M."/>
            <person name="Baxter L."/>
            <person name="Beisel K.W."/>
            <person name="Bersano T."/>
            <person name="Bono H."/>
            <person name="Chalk A.M."/>
            <person name="Chiu K.P."/>
            <person name="Choudhary V."/>
            <person name="Christoffels A."/>
            <person name="Clutterbuck D.R."/>
            <person name="Crowe M.L."/>
            <person name="Dalla E."/>
            <person name="Dalrymple B.P."/>
            <person name="de Bono B."/>
            <person name="Della Gatta G."/>
            <person name="di Bernardo D."/>
            <person name="Down T."/>
            <person name="Engstrom P."/>
            <person name="Fagiolini M."/>
            <person name="Faulkner G."/>
            <person name="Fletcher C.F."/>
            <person name="Fukushima T."/>
            <person name="Furuno M."/>
            <person name="Futaki S."/>
            <person name="Gariboldi M."/>
            <person name="Georgii-Hemming P."/>
            <person name="Gingeras T.R."/>
            <person name="Gojobori T."/>
            <person name="Green R.E."/>
            <person name="Gustincich S."/>
            <person name="Harbers M."/>
            <person name="Hayashi Y."/>
            <person name="Hensch T.K."/>
            <person name="Hirokawa N."/>
            <person name="Hill D."/>
            <person name="Huminiecki L."/>
            <person name="Iacono M."/>
            <person name="Ikeo K."/>
            <person name="Iwama A."/>
            <person name="Ishikawa T."/>
            <person name="Jakt M."/>
            <person name="Kanapin A."/>
            <person name="Katoh M."/>
            <person name="Kawasawa Y."/>
            <person name="Kelso J."/>
            <person name="Kitamura H."/>
            <person name="Kitano H."/>
            <person name="Kollias G."/>
            <person name="Krishnan S.P."/>
            <person name="Kruger A."/>
            <person name="Kummerfeld S.K."/>
            <person name="Kurochkin I.V."/>
            <person name="Lareau L.F."/>
            <person name="Lazarevic D."/>
            <person name="Lipovich L."/>
            <person name="Liu J."/>
            <person name="Liuni S."/>
            <person name="McWilliam S."/>
            <person name="Madan Babu M."/>
            <person name="Madera M."/>
            <person name="Marchionni L."/>
            <person name="Matsuda H."/>
            <person name="Matsuzawa S."/>
            <person name="Miki H."/>
            <person name="Mignone F."/>
            <person name="Miyake S."/>
            <person name="Morris K."/>
            <person name="Mottagui-Tabar S."/>
            <person name="Mulder N."/>
            <person name="Nakano N."/>
            <person name="Nakauchi H."/>
            <person name="Ng P."/>
            <person name="Nilsson R."/>
            <person name="Nishiguchi S."/>
            <person name="Nishikawa S."/>
            <person name="Nori F."/>
            <person name="Ohara O."/>
            <person name="Okazaki Y."/>
            <person name="Orlando V."/>
            <person name="Pang K.C."/>
            <person name="Pavan W.J."/>
            <person name="Pavesi G."/>
            <person name="Pesole G."/>
            <person name="Petrovsky N."/>
            <person name="Piazza S."/>
            <person name="Reed J."/>
            <person name="Reid J.F."/>
            <person name="Ring B.Z."/>
            <person name="Ringwald M."/>
            <person name="Rost B."/>
            <person name="Ruan Y."/>
            <person name="Salzberg S.L."/>
            <person name="Sandelin A."/>
            <person name="Schneider C."/>
            <person name="Schoenbach C."/>
            <person name="Sekiguchi K."/>
            <person name="Semple C.A."/>
            <person name="Seno S."/>
            <person name="Sessa L."/>
            <person name="Sheng Y."/>
            <person name="Shibata Y."/>
            <person name="Shimada H."/>
            <person name="Shimada K."/>
            <person name="Silva D."/>
            <person name="Sinclair B."/>
            <person name="Sperling S."/>
            <person name="Stupka E."/>
            <person name="Sugiura K."/>
            <person name="Sultana R."/>
            <person name="Takenaka Y."/>
            <person name="Taki K."/>
            <person name="Tammoja K."/>
            <person name="Tan S.L."/>
            <person name="Tang S."/>
            <person name="Taylor M.S."/>
            <person name="Tegner J."/>
            <person name="Teichmann S.A."/>
            <person name="Ueda H.R."/>
            <person name="van Nimwegen E."/>
            <person name="Verardo R."/>
            <person name="Wei C.L."/>
            <person name="Yagi K."/>
            <person name="Yamanishi H."/>
            <person name="Zabarovsky E."/>
            <person name="Zhu S."/>
            <person name="Zimmer A."/>
            <person name="Hide W."/>
            <person name="Bult C."/>
            <person name="Grimmond S.M."/>
            <person name="Teasdale R.D."/>
            <person name="Liu E.T."/>
            <person name="Brusic V."/>
            <person name="Quackenbush J."/>
            <person name="Wahlestedt C."/>
            <person name="Mattick J.S."/>
            <person name="Hume D.A."/>
            <person name="Kai C."/>
            <person name="Sasaki D."/>
            <person name="Tomaru Y."/>
            <person name="Fukuda S."/>
            <person name="Kanamori-Katayama M."/>
            <person name="Suzuki M."/>
            <person name="Aoki J."/>
            <person name="Arakawa T."/>
            <person name="Iida J."/>
            <person name="Imamura K."/>
            <person name="Itoh M."/>
            <person name="Kato T."/>
            <person name="Kawaji H."/>
            <person name="Kawagashira N."/>
            <person name="Kawashima T."/>
            <person name="Kojima M."/>
            <person name="Kondo S."/>
            <person name="Konno H."/>
            <person name="Nakano K."/>
            <person name="Ninomiya N."/>
            <person name="Nishio T."/>
            <person name="Okada M."/>
            <person name="Plessy C."/>
            <person name="Shibata K."/>
            <person name="Shiraki T."/>
            <person name="Suzuki S."/>
            <person name="Tagami M."/>
            <person name="Waki K."/>
            <person name="Watahiki A."/>
            <person name="Okamura-Oho Y."/>
            <person name="Suzuki H."/>
            <person name="Kawai J."/>
            <person name="Hayashizaki Y."/>
        </authorList>
    </citation>
    <scope>NUCLEOTIDE SEQUENCE [LARGE SCALE MRNA]</scope>
    <source>
        <strain>C57BL/6J</strain>
        <tissue>Head</tissue>
        <tissue>Kidney</tissue>
    </source>
</reference>
<reference key="3">
    <citation type="journal article" date="2004" name="Genome Res.">
        <title>The status, quality, and expansion of the NIH full-length cDNA project: the Mammalian Gene Collection (MGC).</title>
        <authorList>
            <consortium name="The MGC Project Team"/>
        </authorList>
    </citation>
    <scope>NUCLEOTIDE SEQUENCE [LARGE SCALE MRNA]</scope>
</reference>
<sequence>MGETEGKKEEADYKRLQTFPLVRHSDMPEEMRVETMELCVTACEKFSNNNESAAKMIKETMDKKFGSSWHVVIGEGFGFEITHEVKNLLYLYFGGTLAVCVWKCS</sequence>
<name>DNAL4_MOUSE</name>
<organism>
    <name type="scientific">Mus musculus</name>
    <name type="common">Mouse</name>
    <dbReference type="NCBI Taxonomy" id="10090"/>
    <lineage>
        <taxon>Eukaryota</taxon>
        <taxon>Metazoa</taxon>
        <taxon>Chordata</taxon>
        <taxon>Craniata</taxon>
        <taxon>Vertebrata</taxon>
        <taxon>Euteleostomi</taxon>
        <taxon>Mammalia</taxon>
        <taxon>Eutheria</taxon>
        <taxon>Euarchontoglires</taxon>
        <taxon>Glires</taxon>
        <taxon>Rodentia</taxon>
        <taxon>Myomorpha</taxon>
        <taxon>Muroidea</taxon>
        <taxon>Muridae</taxon>
        <taxon>Murinae</taxon>
        <taxon>Mus</taxon>
        <taxon>Mus</taxon>
    </lineage>
</organism>